<comment type="function">
    <text evidence="1">Polymerase that creates the 3'-poly(A) tail of mRNA's.</text>
</comment>
<comment type="catalytic activity">
    <reaction evidence="1">
        <text>RNA(n) + ATP = RNA(n)-3'-adenine ribonucleotide + diphosphate</text>
        <dbReference type="Rhea" id="RHEA:11332"/>
        <dbReference type="Rhea" id="RHEA-COMP:14527"/>
        <dbReference type="Rhea" id="RHEA-COMP:17347"/>
        <dbReference type="ChEBI" id="CHEBI:30616"/>
        <dbReference type="ChEBI" id="CHEBI:33019"/>
        <dbReference type="ChEBI" id="CHEBI:140395"/>
        <dbReference type="ChEBI" id="CHEBI:173115"/>
        <dbReference type="EC" id="2.7.7.19"/>
    </reaction>
</comment>
<comment type="subunit">
    <text evidence="1">Heterodimer of a large (catalytic) subunit and a small (regulatory) subunit.</text>
</comment>
<comment type="induction">
    <text evidence="1">Expressed in the early phase of the viral replicative cycle.</text>
</comment>
<comment type="similarity">
    <text evidence="3">Belongs to the poxviridae poly(A) polymerase catalytic subunit family.</text>
</comment>
<protein>
    <recommendedName>
        <fullName>Poly(A) polymerase catalytic subunit</fullName>
        <ecNumber>2.7.7.19</ecNumber>
    </recommendedName>
    <alternativeName>
        <fullName>Poly(A) polymerase large subunit</fullName>
        <shortName>PAP-L</shortName>
    </alternativeName>
</protein>
<accession>Q80E12</accession>
<sequence>MNRNPDQNTLPNITLKIIETYLGRVPSVNEYHMLKLQARNIQKITVFNKDIFVSLVKKNKKRFFSDVDTSASEIKDRILSYFSKQTQTYNIGKLFTIIELQSVLVTTYTDILGVLTIKAPNVISSKISYNVTSMEELARDMLNSMNVAVIDKAKVMGRHNVSSLVKNVNKLMEEYLRRHNKSCICYGSYSLYLINPNIRYGDIDILQTNSRTFLIDLAFLIKFITGNNIILSKIPYLRNYMVIKDENDNHIIDSFNIRQDTMNVVPKIFIDNIYIVDPTFQLLNMIKMFSQIDRLEDLSKDPEKFNARMATMLEYVRYTHGIVFDGKRNNMPMKCIIDENNRIVTVTTKDYFSFKKCLVYLDENVLSSDILDLNADTSCDFESVTNSVYLIHDNIMYTYFSNTILLSDKGKVHEISARGLCAHILLYQMLTSGEYKQCLSDLLNSMMNRDKIPIYSHTERDKKPGRHGFINIEKDIIVF</sequence>
<name>PAP1_CWPXG</name>
<evidence type="ECO:0000250" key="1">
    <source>
        <dbReference type="UniProtKB" id="P23371"/>
    </source>
</evidence>
<evidence type="ECO:0000255" key="2">
    <source>
        <dbReference type="PIRSR" id="PIRSR015693-50"/>
    </source>
</evidence>
<evidence type="ECO:0000305" key="3"/>
<feature type="chain" id="PRO_0000308928" description="Poly(A) polymerase catalytic subunit">
    <location>
        <begin position="1"/>
        <end position="479"/>
    </location>
</feature>
<feature type="active site" evidence="2">
    <location>
        <position position="202"/>
    </location>
</feature>
<feature type="active site" evidence="2">
    <location>
        <position position="204"/>
    </location>
</feature>
<feature type="binding site" evidence="1">
    <location>
        <position position="202"/>
    </location>
    <ligand>
        <name>Ca(2+)</name>
        <dbReference type="ChEBI" id="CHEBI:29108"/>
        <label>1</label>
    </ligand>
</feature>
<feature type="binding site" evidence="1">
    <location>
        <position position="202"/>
    </location>
    <ligand>
        <name>Ca(2+)</name>
        <dbReference type="ChEBI" id="CHEBI:29108"/>
        <label>2</label>
    </ligand>
</feature>
<feature type="binding site" evidence="1">
    <location>
        <position position="204"/>
    </location>
    <ligand>
        <name>Ca(2+)</name>
        <dbReference type="ChEBI" id="CHEBI:29108"/>
        <label>1</label>
    </ligand>
</feature>
<feature type="binding site" evidence="1">
    <location>
        <position position="204"/>
    </location>
    <ligand>
        <name>Ca(2+)</name>
        <dbReference type="ChEBI" id="CHEBI:29108"/>
        <label>2</label>
    </ligand>
</feature>
<feature type="binding site" evidence="1">
    <location>
        <position position="253"/>
    </location>
    <ligand>
        <name>Ca(2+)</name>
        <dbReference type="ChEBI" id="CHEBI:29108"/>
        <label>2</label>
    </ligand>
</feature>
<dbReference type="EC" id="2.7.7.19"/>
<dbReference type="EMBL" id="X94355">
    <property type="protein sequence ID" value="CAD90606.1"/>
    <property type="molecule type" value="Genomic_DNA"/>
</dbReference>
<dbReference type="SMR" id="Q80E12"/>
<dbReference type="Proteomes" id="UP000137384">
    <property type="component" value="Segment"/>
</dbReference>
<dbReference type="GO" id="GO:0005524">
    <property type="term" value="F:ATP binding"/>
    <property type="evidence" value="ECO:0007669"/>
    <property type="project" value="UniProtKB-KW"/>
</dbReference>
<dbReference type="GO" id="GO:0046872">
    <property type="term" value="F:metal ion binding"/>
    <property type="evidence" value="ECO:0007669"/>
    <property type="project" value="UniProtKB-KW"/>
</dbReference>
<dbReference type="GO" id="GO:1990817">
    <property type="term" value="F:poly(A) RNA polymerase activity"/>
    <property type="evidence" value="ECO:0007669"/>
    <property type="project" value="UniProtKB-EC"/>
</dbReference>
<dbReference type="GO" id="GO:0006397">
    <property type="term" value="P:mRNA processing"/>
    <property type="evidence" value="ECO:0007669"/>
    <property type="project" value="UniProtKB-KW"/>
</dbReference>
<dbReference type="CDD" id="cd20919">
    <property type="entry name" value="polyA_pol_Pox"/>
    <property type="match status" value="1"/>
</dbReference>
<dbReference type="Gene3D" id="1.20.1270.320">
    <property type="entry name" value="Poxvirus poly(A) polymerase, N domain"/>
    <property type="match status" value="1"/>
</dbReference>
<dbReference type="Gene3D" id="3.30.460.60">
    <property type="entry name" value="Poxvirus poly(A) polymerase, nucleotidyltransferase domain"/>
    <property type="match status" value="1"/>
</dbReference>
<dbReference type="InterPro" id="IPR004976">
    <property type="entry name" value="PolyA_pol_cat_Poxvir"/>
</dbReference>
<dbReference type="InterPro" id="IPR037265">
    <property type="entry name" value="PolyA_pol_cat_sf"/>
</dbReference>
<dbReference type="InterPro" id="IPR024231">
    <property type="entry name" value="PolyA_pol_nucTrfase_Poxvir"/>
</dbReference>
<dbReference type="InterPro" id="IPR038419">
    <property type="entry name" value="PolyA_pol_nucTrfase_sf_Poxvir"/>
</dbReference>
<dbReference type="InterPro" id="IPR024397">
    <property type="entry name" value="Poxvirus_polyA_pol_cat_C"/>
</dbReference>
<dbReference type="InterPro" id="IPR024398">
    <property type="entry name" value="Poxvirus_polyA_pol_cat_N"/>
</dbReference>
<dbReference type="InterPro" id="IPR038337">
    <property type="entry name" value="Poxvirus_polyA_pol_cat_N_sf"/>
</dbReference>
<dbReference type="Pfam" id="PF03296">
    <property type="entry name" value="Pox_polyA_pol"/>
    <property type="match status" value="1"/>
</dbReference>
<dbReference type="Pfam" id="PF12629">
    <property type="entry name" value="Pox_polyA_pol_C"/>
    <property type="match status" value="1"/>
</dbReference>
<dbReference type="Pfam" id="PF12630">
    <property type="entry name" value="Pox_polyA_pol_N"/>
    <property type="match status" value="1"/>
</dbReference>
<dbReference type="PIRSF" id="PIRSF015693">
    <property type="entry name" value="VAC-48L_nuct"/>
    <property type="match status" value="1"/>
</dbReference>
<dbReference type="SUPFAM" id="SSF160957">
    <property type="entry name" value="Poly(A) polymerase catalytic subunit-like"/>
    <property type="match status" value="1"/>
</dbReference>
<organism>
    <name type="scientific">Cowpox virus (strain GRI-90 / Grishak)</name>
    <name type="common">CPV</name>
    <dbReference type="NCBI Taxonomy" id="265871"/>
    <lineage>
        <taxon>Viruses</taxon>
        <taxon>Varidnaviria</taxon>
        <taxon>Bamfordvirae</taxon>
        <taxon>Nucleocytoviricota</taxon>
        <taxon>Pokkesviricetes</taxon>
        <taxon>Chitovirales</taxon>
        <taxon>Poxviridae</taxon>
        <taxon>Chordopoxvirinae</taxon>
        <taxon>Orthopoxvirus</taxon>
        <taxon>Cowpox virus</taxon>
    </lineage>
</organism>
<reference key="1">
    <citation type="submission" date="2003-03" db="EMBL/GenBank/DDBJ databases">
        <title>Structure-function and organization of cowpox virus strain GRI-90 complete genome.</title>
        <authorList>
            <person name="Shchelkunov S.N."/>
            <person name="Safronov P.F."/>
            <person name="Totmenin A.V."/>
            <person name="Miheev M.V."/>
            <person name="Ryazankina O.I."/>
            <person name="Petrov N.A."/>
            <person name="Gutorov V.V."/>
            <person name="Kotwal G.J."/>
            <person name="Sandakhchiev L.S."/>
        </authorList>
    </citation>
    <scope>NUCLEOTIDE SEQUENCE [LARGE SCALE GENOMIC DNA]</scope>
</reference>
<keyword id="KW-0067">ATP-binding</keyword>
<keyword id="KW-0106">Calcium</keyword>
<keyword id="KW-0244">Early protein</keyword>
<keyword id="KW-0479">Metal-binding</keyword>
<keyword id="KW-0507">mRNA processing</keyword>
<keyword id="KW-0547">Nucleotide-binding</keyword>
<keyword id="KW-0804">Transcription</keyword>
<keyword id="KW-0808">Transferase</keyword>
<gene>
    <name type="primary">OPG063</name>
    <name type="synonym">PAPL</name>
    <name type="ORF">F1L</name>
</gene>
<organismHost>
    <name type="scientific">Bos taurus</name>
    <name type="common">Bovine</name>
    <dbReference type="NCBI Taxonomy" id="9913"/>
</organismHost>
<organismHost>
    <name type="scientific">Felis catus</name>
    <name type="common">Cat</name>
    <name type="synonym">Felis silvestris catus</name>
    <dbReference type="NCBI Taxonomy" id="9685"/>
</organismHost>
<organismHost>
    <name type="scientific">Homo sapiens</name>
    <name type="common">Human</name>
    <dbReference type="NCBI Taxonomy" id="9606"/>
</organismHost>
<organismHost>
    <name type="scientific">Loxodonta africana</name>
    <name type="common">African elephant</name>
    <dbReference type="NCBI Taxonomy" id="9785"/>
</organismHost>
<organismHost>
    <name type="scientific">Microtus agrestis</name>
    <name type="common">Short-tailed field vole</name>
    <dbReference type="NCBI Taxonomy" id="29092"/>
</organismHost>
<organismHost>
    <name type="scientific">Mus musculus</name>
    <name type="common">Mouse</name>
    <dbReference type="NCBI Taxonomy" id="10090"/>
</organismHost>
<organismHost>
    <name type="scientific">Myodes glareolus</name>
    <name type="common">Bank vole</name>
    <name type="synonym">Clethrionomys glareolus</name>
    <dbReference type="NCBI Taxonomy" id="447135"/>
</organismHost>
<proteinExistence type="inferred from homology"/>